<organism>
    <name type="scientific">Burkholderia orbicola (strain AU 1054)</name>
    <dbReference type="NCBI Taxonomy" id="331271"/>
    <lineage>
        <taxon>Bacteria</taxon>
        <taxon>Pseudomonadati</taxon>
        <taxon>Pseudomonadota</taxon>
        <taxon>Betaproteobacteria</taxon>
        <taxon>Burkholderiales</taxon>
        <taxon>Burkholderiaceae</taxon>
        <taxon>Burkholderia</taxon>
        <taxon>Burkholderia cepacia complex</taxon>
        <taxon>Burkholderia orbicola</taxon>
    </lineage>
</organism>
<accession>Q1BK24</accession>
<name>TDH_BURO1</name>
<sequence>MKALAKLERGPGLTLTRVKRPEVGHNDVLIKIRRTAICGTDIHIWKWDDWAQKTIPVPMHVGHEYVGEIVEMGQEVRGFAIGDRVSGEGHITCGFCRNCRAGRRHLCRNTVGVGVNREGAFAEYLAIPAFNAFKIPPEISDDLASIFDPFGNATHTALSFNLVGEDVLITGAGPIGIMAVAIAKHVGARNVVITDINDYRLELARKMGATRAVNVARESLRDVMADLHMTEGFDVGLEMSGVPSAFTSLLEAMNHGGKVALLGIPPAQTAIDWNQVIFKGLEIKGIYGREMFETWYKMVAMLQSGLDLSPIITHRFAADDYEQGFAAMLSGESGKVILDWTA</sequence>
<feature type="chain" id="PRO_1000051617" description="L-threonine 3-dehydrogenase">
    <location>
        <begin position="1"/>
        <end position="342"/>
    </location>
</feature>
<feature type="active site" description="Charge relay system" evidence="1">
    <location>
        <position position="40"/>
    </location>
</feature>
<feature type="active site" description="Charge relay system" evidence="1">
    <location>
        <position position="43"/>
    </location>
</feature>
<feature type="binding site" evidence="1">
    <location>
        <position position="38"/>
    </location>
    <ligand>
        <name>Zn(2+)</name>
        <dbReference type="ChEBI" id="CHEBI:29105"/>
        <label>1</label>
        <note>catalytic</note>
    </ligand>
</feature>
<feature type="binding site" evidence="1">
    <location>
        <position position="63"/>
    </location>
    <ligand>
        <name>Zn(2+)</name>
        <dbReference type="ChEBI" id="CHEBI:29105"/>
        <label>1</label>
        <note>catalytic</note>
    </ligand>
</feature>
<feature type="binding site" evidence="1">
    <location>
        <position position="64"/>
    </location>
    <ligand>
        <name>Zn(2+)</name>
        <dbReference type="ChEBI" id="CHEBI:29105"/>
        <label>1</label>
        <note>catalytic</note>
    </ligand>
</feature>
<feature type="binding site" evidence="1">
    <location>
        <position position="93"/>
    </location>
    <ligand>
        <name>Zn(2+)</name>
        <dbReference type="ChEBI" id="CHEBI:29105"/>
        <label>2</label>
    </ligand>
</feature>
<feature type="binding site" evidence="1">
    <location>
        <position position="96"/>
    </location>
    <ligand>
        <name>Zn(2+)</name>
        <dbReference type="ChEBI" id="CHEBI:29105"/>
        <label>2</label>
    </ligand>
</feature>
<feature type="binding site" evidence="1">
    <location>
        <position position="99"/>
    </location>
    <ligand>
        <name>Zn(2+)</name>
        <dbReference type="ChEBI" id="CHEBI:29105"/>
        <label>2</label>
    </ligand>
</feature>
<feature type="binding site" evidence="1">
    <location>
        <position position="107"/>
    </location>
    <ligand>
        <name>Zn(2+)</name>
        <dbReference type="ChEBI" id="CHEBI:29105"/>
        <label>2</label>
    </ligand>
</feature>
<feature type="binding site" evidence="1">
    <location>
        <position position="175"/>
    </location>
    <ligand>
        <name>NAD(+)</name>
        <dbReference type="ChEBI" id="CHEBI:57540"/>
    </ligand>
</feature>
<feature type="binding site" evidence="1">
    <location>
        <position position="195"/>
    </location>
    <ligand>
        <name>NAD(+)</name>
        <dbReference type="ChEBI" id="CHEBI:57540"/>
    </ligand>
</feature>
<feature type="binding site" evidence="1">
    <location>
        <position position="200"/>
    </location>
    <ligand>
        <name>NAD(+)</name>
        <dbReference type="ChEBI" id="CHEBI:57540"/>
    </ligand>
</feature>
<feature type="binding site" evidence="1">
    <location>
        <begin position="262"/>
        <end position="264"/>
    </location>
    <ligand>
        <name>NAD(+)</name>
        <dbReference type="ChEBI" id="CHEBI:57540"/>
    </ligand>
</feature>
<feature type="binding site" evidence="1">
    <location>
        <begin position="286"/>
        <end position="287"/>
    </location>
    <ligand>
        <name>NAD(+)</name>
        <dbReference type="ChEBI" id="CHEBI:57540"/>
    </ligand>
</feature>
<feature type="site" description="Important for catalytic activity for the proton relay mechanism but does not participate directly in the coordination of zinc atom" evidence="1">
    <location>
        <position position="148"/>
    </location>
</feature>
<gene>
    <name evidence="1" type="primary">tdh</name>
    <name type="ordered locus">Bcen_5157</name>
</gene>
<protein>
    <recommendedName>
        <fullName evidence="1">L-threonine 3-dehydrogenase</fullName>
        <shortName evidence="1">TDH</shortName>
        <ecNumber evidence="1">1.1.1.103</ecNumber>
    </recommendedName>
</protein>
<evidence type="ECO:0000255" key="1">
    <source>
        <dbReference type="HAMAP-Rule" id="MF_00627"/>
    </source>
</evidence>
<reference key="1">
    <citation type="submission" date="2006-05" db="EMBL/GenBank/DDBJ databases">
        <title>Complete sequence of chromosome 2 of Burkholderia cenocepacia AU 1054.</title>
        <authorList>
            <consortium name="US DOE Joint Genome Institute"/>
            <person name="Copeland A."/>
            <person name="Lucas S."/>
            <person name="Lapidus A."/>
            <person name="Barry K."/>
            <person name="Detter J.C."/>
            <person name="Glavina del Rio T."/>
            <person name="Hammon N."/>
            <person name="Israni S."/>
            <person name="Dalin E."/>
            <person name="Tice H."/>
            <person name="Pitluck S."/>
            <person name="Chain P."/>
            <person name="Malfatti S."/>
            <person name="Shin M."/>
            <person name="Vergez L."/>
            <person name="Schmutz J."/>
            <person name="Larimer F."/>
            <person name="Land M."/>
            <person name="Hauser L."/>
            <person name="Kyrpides N."/>
            <person name="Lykidis A."/>
            <person name="LiPuma J.J."/>
            <person name="Konstantinidis K."/>
            <person name="Tiedje J.M."/>
            <person name="Richardson P."/>
        </authorList>
    </citation>
    <scope>NUCLEOTIDE SEQUENCE [LARGE SCALE GENOMIC DNA]</scope>
    <source>
        <strain>AU 1054</strain>
    </source>
</reference>
<comment type="function">
    <text evidence="1">Catalyzes the NAD(+)-dependent oxidation of L-threonine to 2-amino-3-ketobutyrate.</text>
</comment>
<comment type="catalytic activity">
    <reaction evidence="1">
        <text>L-threonine + NAD(+) = (2S)-2-amino-3-oxobutanoate + NADH + H(+)</text>
        <dbReference type="Rhea" id="RHEA:13161"/>
        <dbReference type="ChEBI" id="CHEBI:15378"/>
        <dbReference type="ChEBI" id="CHEBI:57540"/>
        <dbReference type="ChEBI" id="CHEBI:57926"/>
        <dbReference type="ChEBI" id="CHEBI:57945"/>
        <dbReference type="ChEBI" id="CHEBI:78948"/>
        <dbReference type="EC" id="1.1.1.103"/>
    </reaction>
</comment>
<comment type="cofactor">
    <cofactor evidence="1">
        <name>Zn(2+)</name>
        <dbReference type="ChEBI" id="CHEBI:29105"/>
    </cofactor>
    <text evidence="1">Binds 2 Zn(2+) ions per subunit.</text>
</comment>
<comment type="pathway">
    <text evidence="1">Amino-acid degradation; L-threonine degradation via oxydo-reductase pathway; glycine from L-threonine: step 1/2.</text>
</comment>
<comment type="subunit">
    <text evidence="1">Homotetramer.</text>
</comment>
<comment type="subcellular location">
    <subcellularLocation>
        <location evidence="1">Cytoplasm</location>
    </subcellularLocation>
</comment>
<comment type="similarity">
    <text evidence="1">Belongs to the zinc-containing alcohol dehydrogenase family.</text>
</comment>
<dbReference type="EC" id="1.1.1.103" evidence="1"/>
<dbReference type="EMBL" id="CP000379">
    <property type="protein sequence ID" value="ABF80031.1"/>
    <property type="molecule type" value="Genomic_DNA"/>
</dbReference>
<dbReference type="SMR" id="Q1BK24"/>
<dbReference type="HOGENOM" id="CLU_026673_11_0_4"/>
<dbReference type="UniPathway" id="UPA00046">
    <property type="reaction ID" value="UER00505"/>
</dbReference>
<dbReference type="GO" id="GO:0005737">
    <property type="term" value="C:cytoplasm"/>
    <property type="evidence" value="ECO:0007669"/>
    <property type="project" value="UniProtKB-SubCell"/>
</dbReference>
<dbReference type="GO" id="GO:0008743">
    <property type="term" value="F:L-threonine 3-dehydrogenase activity"/>
    <property type="evidence" value="ECO:0007669"/>
    <property type="project" value="UniProtKB-UniRule"/>
</dbReference>
<dbReference type="GO" id="GO:0008270">
    <property type="term" value="F:zinc ion binding"/>
    <property type="evidence" value="ECO:0007669"/>
    <property type="project" value="UniProtKB-UniRule"/>
</dbReference>
<dbReference type="GO" id="GO:0019518">
    <property type="term" value="P:L-threonine catabolic process to glycine"/>
    <property type="evidence" value="ECO:0007669"/>
    <property type="project" value="UniProtKB-UniPathway"/>
</dbReference>
<dbReference type="Gene3D" id="3.90.180.10">
    <property type="entry name" value="Medium-chain alcohol dehydrogenases, catalytic domain"/>
    <property type="match status" value="1"/>
</dbReference>
<dbReference type="Gene3D" id="3.40.50.720">
    <property type="entry name" value="NAD(P)-binding Rossmann-like Domain"/>
    <property type="match status" value="1"/>
</dbReference>
<dbReference type="HAMAP" id="MF_00627">
    <property type="entry name" value="Thr_dehydrog"/>
    <property type="match status" value="1"/>
</dbReference>
<dbReference type="InterPro" id="IPR013149">
    <property type="entry name" value="ADH-like_C"/>
</dbReference>
<dbReference type="InterPro" id="IPR013154">
    <property type="entry name" value="ADH-like_N"/>
</dbReference>
<dbReference type="InterPro" id="IPR002328">
    <property type="entry name" value="ADH_Zn_CS"/>
</dbReference>
<dbReference type="InterPro" id="IPR011032">
    <property type="entry name" value="GroES-like_sf"/>
</dbReference>
<dbReference type="InterPro" id="IPR004627">
    <property type="entry name" value="L-Threonine_3-DHase"/>
</dbReference>
<dbReference type="InterPro" id="IPR036291">
    <property type="entry name" value="NAD(P)-bd_dom_sf"/>
</dbReference>
<dbReference type="InterPro" id="IPR020843">
    <property type="entry name" value="PKS_ER"/>
</dbReference>
<dbReference type="InterPro" id="IPR050129">
    <property type="entry name" value="Zn_alcohol_dh"/>
</dbReference>
<dbReference type="NCBIfam" id="NF003808">
    <property type="entry name" value="PRK05396.1"/>
    <property type="match status" value="1"/>
</dbReference>
<dbReference type="NCBIfam" id="TIGR00692">
    <property type="entry name" value="tdh"/>
    <property type="match status" value="1"/>
</dbReference>
<dbReference type="PANTHER" id="PTHR43401">
    <property type="entry name" value="L-THREONINE 3-DEHYDROGENASE"/>
    <property type="match status" value="1"/>
</dbReference>
<dbReference type="PANTHER" id="PTHR43401:SF2">
    <property type="entry name" value="L-THREONINE 3-DEHYDROGENASE"/>
    <property type="match status" value="1"/>
</dbReference>
<dbReference type="Pfam" id="PF08240">
    <property type="entry name" value="ADH_N"/>
    <property type="match status" value="1"/>
</dbReference>
<dbReference type="Pfam" id="PF00107">
    <property type="entry name" value="ADH_zinc_N"/>
    <property type="match status" value="1"/>
</dbReference>
<dbReference type="SMART" id="SM00829">
    <property type="entry name" value="PKS_ER"/>
    <property type="match status" value="1"/>
</dbReference>
<dbReference type="SUPFAM" id="SSF50129">
    <property type="entry name" value="GroES-like"/>
    <property type="match status" value="1"/>
</dbReference>
<dbReference type="SUPFAM" id="SSF51735">
    <property type="entry name" value="NAD(P)-binding Rossmann-fold domains"/>
    <property type="match status" value="1"/>
</dbReference>
<dbReference type="PROSITE" id="PS00059">
    <property type="entry name" value="ADH_ZINC"/>
    <property type="match status" value="1"/>
</dbReference>
<proteinExistence type="inferred from homology"/>
<keyword id="KW-0963">Cytoplasm</keyword>
<keyword id="KW-0479">Metal-binding</keyword>
<keyword id="KW-0520">NAD</keyword>
<keyword id="KW-0560">Oxidoreductase</keyword>
<keyword id="KW-0862">Zinc</keyword>